<sequence>MSRRGTAEEKTAKSDPIYRNRLVNMLVNRILKHGKKSLAYQIIYRAVKKIQQKTETNPLSVLRQAIRGVTPDIAVKARRVGGSTHQVPIEIGSTQGKALAIRWLLGASRKRPGRNMAFKLSSELVDAAKGSGDAIRKKEETHRMAEANRAFAHFR</sequence>
<reference key="1">
    <citation type="submission" date="2002-09" db="EMBL/GenBank/DDBJ databases">
        <title>Phylogenetic relationships among the major lineages of Asparagales based on a large chloroplast data set.</title>
        <authorList>
            <person name="McPherson M.A."/>
            <person name="Rai H.S."/>
            <person name="Wong W.A."/>
            <person name="Graham S.W."/>
        </authorList>
    </citation>
    <scope>NUCLEOTIDE SEQUENCE [GENOMIC DNA]</scope>
</reference>
<name>RR7_MAIRA</name>
<evidence type="ECO:0000250" key="1"/>
<evidence type="ECO:0000305" key="2"/>
<accession>Q67IB6</accession>
<organism>
    <name type="scientific">Maianthemum racemosum</name>
    <name type="common">False Solomon's-seal</name>
    <name type="synonym">Smilacina racemosa</name>
    <dbReference type="NCBI Taxonomy" id="39530"/>
    <lineage>
        <taxon>Eukaryota</taxon>
        <taxon>Viridiplantae</taxon>
        <taxon>Streptophyta</taxon>
        <taxon>Embryophyta</taxon>
        <taxon>Tracheophyta</taxon>
        <taxon>Spermatophyta</taxon>
        <taxon>Magnoliopsida</taxon>
        <taxon>Liliopsida</taxon>
        <taxon>Asparagales</taxon>
        <taxon>Asparagaceae</taxon>
        <taxon>Nolinoideae</taxon>
        <taxon>Maianthemum</taxon>
    </lineage>
</organism>
<geneLocation type="chloroplast"/>
<feature type="chain" id="PRO_0000124471" description="Small ribosomal subunit protein uS7c">
    <location>
        <begin position="1"/>
        <end position="155"/>
    </location>
</feature>
<protein>
    <recommendedName>
        <fullName evidence="2">Small ribosomal subunit protein uS7c</fullName>
    </recommendedName>
    <alternativeName>
        <fullName>30S ribosomal protein S7, chloroplastic</fullName>
    </alternativeName>
</protein>
<keyword id="KW-0150">Chloroplast</keyword>
<keyword id="KW-0934">Plastid</keyword>
<keyword id="KW-0687">Ribonucleoprotein</keyword>
<keyword id="KW-0689">Ribosomal protein</keyword>
<keyword id="KW-0694">RNA-binding</keyword>
<keyword id="KW-0699">rRNA-binding</keyword>
<dbReference type="EMBL" id="AY147494">
    <property type="protein sequence ID" value="AAN32087.1"/>
    <property type="molecule type" value="Genomic_DNA"/>
</dbReference>
<dbReference type="SMR" id="Q67IB6"/>
<dbReference type="GO" id="GO:0009507">
    <property type="term" value="C:chloroplast"/>
    <property type="evidence" value="ECO:0007669"/>
    <property type="project" value="UniProtKB-SubCell"/>
</dbReference>
<dbReference type="GO" id="GO:0015935">
    <property type="term" value="C:small ribosomal subunit"/>
    <property type="evidence" value="ECO:0007669"/>
    <property type="project" value="InterPro"/>
</dbReference>
<dbReference type="GO" id="GO:0019843">
    <property type="term" value="F:rRNA binding"/>
    <property type="evidence" value="ECO:0007669"/>
    <property type="project" value="UniProtKB-UniRule"/>
</dbReference>
<dbReference type="GO" id="GO:0003735">
    <property type="term" value="F:structural constituent of ribosome"/>
    <property type="evidence" value="ECO:0007669"/>
    <property type="project" value="InterPro"/>
</dbReference>
<dbReference type="GO" id="GO:0006412">
    <property type="term" value="P:translation"/>
    <property type="evidence" value="ECO:0007669"/>
    <property type="project" value="UniProtKB-UniRule"/>
</dbReference>
<dbReference type="CDD" id="cd14871">
    <property type="entry name" value="uS7_Chloroplast"/>
    <property type="match status" value="1"/>
</dbReference>
<dbReference type="FunFam" id="1.10.455.10:FF:000001">
    <property type="entry name" value="30S ribosomal protein S7"/>
    <property type="match status" value="1"/>
</dbReference>
<dbReference type="Gene3D" id="1.10.455.10">
    <property type="entry name" value="Ribosomal protein S7 domain"/>
    <property type="match status" value="1"/>
</dbReference>
<dbReference type="HAMAP" id="MF_00480_B">
    <property type="entry name" value="Ribosomal_uS7_B"/>
    <property type="match status" value="1"/>
</dbReference>
<dbReference type="InterPro" id="IPR000235">
    <property type="entry name" value="Ribosomal_uS7"/>
</dbReference>
<dbReference type="InterPro" id="IPR005717">
    <property type="entry name" value="Ribosomal_uS7_bac/org-type"/>
</dbReference>
<dbReference type="InterPro" id="IPR020606">
    <property type="entry name" value="Ribosomal_uS7_CS"/>
</dbReference>
<dbReference type="InterPro" id="IPR023798">
    <property type="entry name" value="Ribosomal_uS7_dom"/>
</dbReference>
<dbReference type="InterPro" id="IPR036823">
    <property type="entry name" value="Ribosomal_uS7_dom_sf"/>
</dbReference>
<dbReference type="NCBIfam" id="TIGR01029">
    <property type="entry name" value="rpsG_bact"/>
    <property type="match status" value="1"/>
</dbReference>
<dbReference type="PANTHER" id="PTHR11205">
    <property type="entry name" value="RIBOSOMAL PROTEIN S7"/>
    <property type="match status" value="1"/>
</dbReference>
<dbReference type="Pfam" id="PF00177">
    <property type="entry name" value="Ribosomal_S7"/>
    <property type="match status" value="1"/>
</dbReference>
<dbReference type="PIRSF" id="PIRSF002122">
    <property type="entry name" value="RPS7p_RPS7a_RPS5e_RPS7o"/>
    <property type="match status" value="1"/>
</dbReference>
<dbReference type="SUPFAM" id="SSF47973">
    <property type="entry name" value="Ribosomal protein S7"/>
    <property type="match status" value="1"/>
</dbReference>
<dbReference type="PROSITE" id="PS00052">
    <property type="entry name" value="RIBOSOMAL_S7"/>
    <property type="match status" value="1"/>
</dbReference>
<proteinExistence type="inferred from homology"/>
<gene>
    <name type="primary">rps7</name>
</gene>
<comment type="function">
    <text evidence="1">One of the primary rRNA binding proteins, it binds directly to 16S rRNA where it nucleates assembly of the head domain of the 30S subunit.</text>
</comment>
<comment type="subunit">
    <text>Part of the 30S ribosomal subunit.</text>
</comment>
<comment type="subcellular location">
    <subcellularLocation>
        <location>Plastid</location>
        <location>Chloroplast</location>
    </subcellularLocation>
</comment>
<comment type="similarity">
    <text evidence="2">Belongs to the universal ribosomal protein uS7 family.</text>
</comment>